<accession>P86318</accession>
<sequence length="114" mass="12174">QDAAKGEALFKQCQTCHRADKNMVGPALAGVVGRKAGTAPGFSYSPLNHAAGEAGLVWSQENVVEYLADPNAFLKKFLTDKGQADKATGSTKMTFKLANEQQRKDVAAYLATLK</sequence>
<organism>
    <name type="scientific">Rhodopseudomonas palustris</name>
    <dbReference type="NCBI Taxonomy" id="1076"/>
    <lineage>
        <taxon>Bacteria</taxon>
        <taxon>Pseudomonadati</taxon>
        <taxon>Pseudomonadota</taxon>
        <taxon>Alphaproteobacteria</taxon>
        <taxon>Hyphomicrobiales</taxon>
        <taxon>Nitrobacteraceae</taxon>
        <taxon>Rhodopseudomonas</taxon>
    </lineage>
</organism>
<feature type="chain" id="PRO_0000379964" description="Cytochrome c2">
    <location>
        <begin position="1"/>
        <end position="114"/>
    </location>
</feature>
<feature type="binding site" description="covalent" evidence="1 3">
    <location>
        <position position="13"/>
    </location>
    <ligand>
        <name>heme c</name>
        <dbReference type="ChEBI" id="CHEBI:61717"/>
    </ligand>
</feature>
<feature type="binding site" description="covalent" evidence="1 3">
    <location>
        <position position="16"/>
    </location>
    <ligand>
        <name>heme c</name>
        <dbReference type="ChEBI" id="CHEBI:61717"/>
    </ligand>
</feature>
<feature type="binding site" description="axial binding residue" evidence="1 3">
    <location>
        <position position="17"/>
    </location>
    <ligand>
        <name>heme c</name>
        <dbReference type="ChEBI" id="CHEBI:61717"/>
    </ligand>
    <ligandPart>
        <name>Fe</name>
        <dbReference type="ChEBI" id="CHEBI:18248"/>
    </ligandPart>
</feature>
<feature type="binding site" description="axial binding residue" evidence="1 3">
    <location>
        <position position="93"/>
    </location>
    <ligand>
        <name>heme c</name>
        <dbReference type="ChEBI" id="CHEBI:61717"/>
    </ligand>
    <ligandPart>
        <name>Fe</name>
        <dbReference type="ChEBI" id="CHEBI:18248"/>
    </ligandPart>
</feature>
<feature type="modified residue" description="Pyrrolidone carboxylic acid" evidence="1">
    <location>
        <position position="1"/>
    </location>
</feature>
<protein>
    <recommendedName>
        <fullName evidence="1">Cytochrome c2</fullName>
    </recommendedName>
</protein>
<comment type="function">
    <text evidence="5">Cytochrome c2 is found mainly in purple, non-sulfur, photosynthetic bacteria where it functions as the electron donor to the oxidized bacteriochlorophyll in the photophosphorylation pathway. However, it may also have a role in the respiratory chain and is found in some non-photosynthetic bacteria.</text>
</comment>
<comment type="subcellular location">
    <subcellularLocation>
        <location evidence="4">Periplasm</location>
    </subcellularLocation>
</comment>
<comment type="PTM">
    <text evidence="1">Binds 1 heme c group covalently per subunit.</text>
</comment>
<comment type="similarity">
    <text evidence="2">Belongs to the cytochrome c family.</text>
</comment>
<dbReference type="SMR" id="P86318"/>
<dbReference type="STRING" id="1421013.GCA_000504425_03683"/>
<dbReference type="GO" id="GO:0042597">
    <property type="term" value="C:periplasmic space"/>
    <property type="evidence" value="ECO:0000314"/>
    <property type="project" value="UniProtKB"/>
</dbReference>
<dbReference type="GO" id="GO:0009055">
    <property type="term" value="F:electron transfer activity"/>
    <property type="evidence" value="ECO:0007669"/>
    <property type="project" value="InterPro"/>
</dbReference>
<dbReference type="GO" id="GO:0020037">
    <property type="term" value="F:heme binding"/>
    <property type="evidence" value="ECO:0007669"/>
    <property type="project" value="InterPro"/>
</dbReference>
<dbReference type="GO" id="GO:0046872">
    <property type="term" value="F:metal ion binding"/>
    <property type="evidence" value="ECO:0007669"/>
    <property type="project" value="UniProtKB-KW"/>
</dbReference>
<dbReference type="GO" id="GO:0015979">
    <property type="term" value="P:photosynthesis"/>
    <property type="evidence" value="ECO:0007669"/>
    <property type="project" value="UniProtKB-KW"/>
</dbReference>
<dbReference type="Gene3D" id="1.10.760.10">
    <property type="entry name" value="Cytochrome c-like domain"/>
    <property type="match status" value="1"/>
</dbReference>
<dbReference type="InterPro" id="IPR009056">
    <property type="entry name" value="Cyt_c-like_dom"/>
</dbReference>
<dbReference type="InterPro" id="IPR036909">
    <property type="entry name" value="Cyt_c-like_dom_sf"/>
</dbReference>
<dbReference type="InterPro" id="IPR002327">
    <property type="entry name" value="Cyt_c_1A/1B"/>
</dbReference>
<dbReference type="PANTHER" id="PTHR11961">
    <property type="entry name" value="CYTOCHROME C"/>
    <property type="match status" value="1"/>
</dbReference>
<dbReference type="Pfam" id="PF00034">
    <property type="entry name" value="Cytochrom_C"/>
    <property type="match status" value="1"/>
</dbReference>
<dbReference type="PRINTS" id="PR00604">
    <property type="entry name" value="CYTCHRMECIAB"/>
</dbReference>
<dbReference type="SUPFAM" id="SSF46626">
    <property type="entry name" value="Cytochrome c"/>
    <property type="match status" value="1"/>
</dbReference>
<dbReference type="PROSITE" id="PS51007">
    <property type="entry name" value="CYTC"/>
    <property type="match status" value="1"/>
</dbReference>
<name>CYC24_RHOPL</name>
<proteinExistence type="evidence at protein level"/>
<keyword id="KW-0903">Direct protein sequencing</keyword>
<keyword id="KW-0249">Electron transport</keyword>
<keyword id="KW-0349">Heme</keyword>
<keyword id="KW-0408">Iron</keyword>
<keyword id="KW-0479">Metal-binding</keyword>
<keyword id="KW-0574">Periplasm</keyword>
<keyword id="KW-0602">Photosynthesis</keyword>
<keyword id="KW-0873">Pyrrolidone carboxylic acid</keyword>
<keyword id="KW-0813">Transport</keyword>
<reference key="1">
    <citation type="journal article" date="2010" name="Arch. Microbiol.">
        <title>Evidence from the structure and function of cytochromes c(2) that nonsulfur purple bacterial photosynthesis followed the evolution of oxygen respiration.</title>
        <authorList>
            <person name="Meyer T."/>
            <person name="Van Driessche G."/>
            <person name="Ambler R."/>
            <person name="Kyndt J."/>
            <person name="Devreese B."/>
            <person name="Van Beeumen J."/>
            <person name="Cusanovich M."/>
        </authorList>
    </citation>
    <scope>PROTEIN SEQUENCE</scope>
    <scope>SUBCELLULAR LOCATION</scope>
</reference>
<evidence type="ECO:0000250" key="1">
    <source>
        <dbReference type="UniProtKB" id="P0C0X8"/>
    </source>
</evidence>
<evidence type="ECO:0000255" key="2"/>
<evidence type="ECO:0000255" key="3">
    <source>
        <dbReference type="PROSITE-ProRule" id="PRU00433"/>
    </source>
</evidence>
<evidence type="ECO:0000269" key="4">
    <source>
    </source>
</evidence>
<evidence type="ECO:0000305" key="5"/>